<protein>
    <recommendedName>
        <fullName evidence="1">6,7-dimethyl-8-ribityllumazine synthase</fullName>
        <shortName evidence="1">DMRL synthase</shortName>
        <shortName evidence="1">LS</shortName>
        <shortName evidence="1">Lumazine synthase</shortName>
        <ecNumber evidence="1">2.5.1.78</ecNumber>
    </recommendedName>
</protein>
<accession>C3L2U0</accession>
<proteinExistence type="inferred from homology"/>
<sequence length="154" mass="16561">MKIYEGKLTAEGLKVGIIVSRFNEFITSKLLAGSIDCLKRHGAKEDNIEVCWVPGAFEIPVIAKKMASKGKYDAVICLGAVIRGATPHFDYVSSEVSKGVAHVSLDKEVPVIFGVLTTNTIEQAIERAGTKAGNKGYDAAMSAIEMSNLMKILD</sequence>
<gene>
    <name evidence="1" type="primary">ribH</name>
    <name type="ordered locus">CLJ_B3117</name>
</gene>
<evidence type="ECO:0000255" key="1">
    <source>
        <dbReference type="HAMAP-Rule" id="MF_00178"/>
    </source>
</evidence>
<reference key="1">
    <citation type="submission" date="2008-05" db="EMBL/GenBank/DDBJ databases">
        <title>Genome sequence of Clostridium botulinum Ba4 strain 657.</title>
        <authorList>
            <person name="Shrivastava S."/>
            <person name="Brown J.L."/>
            <person name="Bruce D."/>
            <person name="Detter C."/>
            <person name="Munk C."/>
            <person name="Smith L.A."/>
            <person name="Smith T.J."/>
            <person name="Sutton G."/>
            <person name="Brettin T.S."/>
        </authorList>
    </citation>
    <scope>NUCLEOTIDE SEQUENCE [LARGE SCALE GENOMIC DNA]</scope>
    <source>
        <strain>657 / Type Ba4</strain>
    </source>
</reference>
<name>RISB_CLOB6</name>
<feature type="chain" id="PRO_1000203783" description="6,7-dimethyl-8-ribityllumazine synthase">
    <location>
        <begin position="1"/>
        <end position="154"/>
    </location>
</feature>
<feature type="active site" description="Proton donor" evidence="1">
    <location>
        <position position="88"/>
    </location>
</feature>
<feature type="binding site" evidence="1">
    <location>
        <position position="22"/>
    </location>
    <ligand>
        <name>5-amino-6-(D-ribitylamino)uracil</name>
        <dbReference type="ChEBI" id="CHEBI:15934"/>
    </ligand>
</feature>
<feature type="binding site" evidence="1">
    <location>
        <begin position="56"/>
        <end position="58"/>
    </location>
    <ligand>
        <name>5-amino-6-(D-ribitylamino)uracil</name>
        <dbReference type="ChEBI" id="CHEBI:15934"/>
    </ligand>
</feature>
<feature type="binding site" evidence="1">
    <location>
        <begin position="80"/>
        <end position="82"/>
    </location>
    <ligand>
        <name>5-amino-6-(D-ribitylamino)uracil</name>
        <dbReference type="ChEBI" id="CHEBI:15934"/>
    </ligand>
</feature>
<feature type="binding site" evidence="1">
    <location>
        <begin position="85"/>
        <end position="86"/>
    </location>
    <ligand>
        <name>(2S)-2-hydroxy-3-oxobutyl phosphate</name>
        <dbReference type="ChEBI" id="CHEBI:58830"/>
    </ligand>
</feature>
<feature type="binding site" evidence="1">
    <location>
        <position position="113"/>
    </location>
    <ligand>
        <name>5-amino-6-(D-ribitylamino)uracil</name>
        <dbReference type="ChEBI" id="CHEBI:15934"/>
    </ligand>
</feature>
<feature type="binding site" evidence="1">
    <location>
        <position position="127"/>
    </location>
    <ligand>
        <name>(2S)-2-hydroxy-3-oxobutyl phosphate</name>
        <dbReference type="ChEBI" id="CHEBI:58830"/>
    </ligand>
</feature>
<comment type="function">
    <text evidence="1">Catalyzes the formation of 6,7-dimethyl-8-ribityllumazine by condensation of 5-amino-6-(D-ribitylamino)uracil with 3,4-dihydroxy-2-butanone 4-phosphate. This is the penultimate step in the biosynthesis of riboflavin.</text>
</comment>
<comment type="catalytic activity">
    <reaction evidence="1">
        <text>(2S)-2-hydroxy-3-oxobutyl phosphate + 5-amino-6-(D-ribitylamino)uracil = 6,7-dimethyl-8-(1-D-ribityl)lumazine + phosphate + 2 H2O + H(+)</text>
        <dbReference type="Rhea" id="RHEA:26152"/>
        <dbReference type="ChEBI" id="CHEBI:15377"/>
        <dbReference type="ChEBI" id="CHEBI:15378"/>
        <dbReference type="ChEBI" id="CHEBI:15934"/>
        <dbReference type="ChEBI" id="CHEBI:43474"/>
        <dbReference type="ChEBI" id="CHEBI:58201"/>
        <dbReference type="ChEBI" id="CHEBI:58830"/>
        <dbReference type="EC" id="2.5.1.78"/>
    </reaction>
</comment>
<comment type="pathway">
    <text evidence="1">Cofactor biosynthesis; riboflavin biosynthesis; riboflavin from 2-hydroxy-3-oxobutyl phosphate and 5-amino-6-(D-ribitylamino)uracil: step 1/2.</text>
</comment>
<comment type="similarity">
    <text evidence="1">Belongs to the DMRL synthase family.</text>
</comment>
<organism>
    <name type="scientific">Clostridium botulinum (strain 657 / Type Ba4)</name>
    <dbReference type="NCBI Taxonomy" id="515621"/>
    <lineage>
        <taxon>Bacteria</taxon>
        <taxon>Bacillati</taxon>
        <taxon>Bacillota</taxon>
        <taxon>Clostridia</taxon>
        <taxon>Eubacteriales</taxon>
        <taxon>Clostridiaceae</taxon>
        <taxon>Clostridium</taxon>
    </lineage>
</organism>
<keyword id="KW-0686">Riboflavin biosynthesis</keyword>
<keyword id="KW-0808">Transferase</keyword>
<dbReference type="EC" id="2.5.1.78" evidence="1"/>
<dbReference type="EMBL" id="CP001083">
    <property type="protein sequence ID" value="ACQ52091.1"/>
    <property type="molecule type" value="Genomic_DNA"/>
</dbReference>
<dbReference type="SMR" id="C3L2U0"/>
<dbReference type="KEGG" id="cbi:CLJ_B3117"/>
<dbReference type="HOGENOM" id="CLU_089358_1_1_9"/>
<dbReference type="UniPathway" id="UPA00275">
    <property type="reaction ID" value="UER00404"/>
</dbReference>
<dbReference type="Proteomes" id="UP000002333">
    <property type="component" value="Chromosome"/>
</dbReference>
<dbReference type="GO" id="GO:0005829">
    <property type="term" value="C:cytosol"/>
    <property type="evidence" value="ECO:0007669"/>
    <property type="project" value="TreeGrafter"/>
</dbReference>
<dbReference type="GO" id="GO:0009349">
    <property type="term" value="C:riboflavin synthase complex"/>
    <property type="evidence" value="ECO:0007669"/>
    <property type="project" value="InterPro"/>
</dbReference>
<dbReference type="GO" id="GO:0000906">
    <property type="term" value="F:6,7-dimethyl-8-ribityllumazine synthase activity"/>
    <property type="evidence" value="ECO:0007669"/>
    <property type="project" value="UniProtKB-UniRule"/>
</dbReference>
<dbReference type="GO" id="GO:0009231">
    <property type="term" value="P:riboflavin biosynthetic process"/>
    <property type="evidence" value="ECO:0007669"/>
    <property type="project" value="UniProtKB-UniRule"/>
</dbReference>
<dbReference type="CDD" id="cd09209">
    <property type="entry name" value="Lumazine_synthase-I"/>
    <property type="match status" value="1"/>
</dbReference>
<dbReference type="FunFam" id="3.40.50.960:FF:000001">
    <property type="entry name" value="6,7-dimethyl-8-ribityllumazine synthase"/>
    <property type="match status" value="1"/>
</dbReference>
<dbReference type="Gene3D" id="3.40.50.960">
    <property type="entry name" value="Lumazine/riboflavin synthase"/>
    <property type="match status" value="1"/>
</dbReference>
<dbReference type="HAMAP" id="MF_00178">
    <property type="entry name" value="Lumazine_synth"/>
    <property type="match status" value="1"/>
</dbReference>
<dbReference type="InterPro" id="IPR034964">
    <property type="entry name" value="LS"/>
</dbReference>
<dbReference type="InterPro" id="IPR002180">
    <property type="entry name" value="LS/RS"/>
</dbReference>
<dbReference type="InterPro" id="IPR036467">
    <property type="entry name" value="LS/RS_sf"/>
</dbReference>
<dbReference type="NCBIfam" id="TIGR00114">
    <property type="entry name" value="lumazine-synth"/>
    <property type="match status" value="1"/>
</dbReference>
<dbReference type="NCBIfam" id="NF000812">
    <property type="entry name" value="PRK00061.1-4"/>
    <property type="match status" value="1"/>
</dbReference>
<dbReference type="PANTHER" id="PTHR21058:SF0">
    <property type="entry name" value="6,7-DIMETHYL-8-RIBITYLLUMAZINE SYNTHASE"/>
    <property type="match status" value="1"/>
</dbReference>
<dbReference type="PANTHER" id="PTHR21058">
    <property type="entry name" value="6,7-DIMETHYL-8-RIBITYLLUMAZINE SYNTHASE DMRL SYNTHASE LUMAZINE SYNTHASE"/>
    <property type="match status" value="1"/>
</dbReference>
<dbReference type="Pfam" id="PF00885">
    <property type="entry name" value="DMRL_synthase"/>
    <property type="match status" value="1"/>
</dbReference>
<dbReference type="SUPFAM" id="SSF52121">
    <property type="entry name" value="Lumazine synthase"/>
    <property type="match status" value="1"/>
</dbReference>